<organism>
    <name type="scientific">Saccharomyces cerevisiae (strain ATCC 204508 / S288c)</name>
    <name type="common">Baker's yeast</name>
    <dbReference type="NCBI Taxonomy" id="559292"/>
    <lineage>
        <taxon>Eukaryota</taxon>
        <taxon>Fungi</taxon>
        <taxon>Dikarya</taxon>
        <taxon>Ascomycota</taxon>
        <taxon>Saccharomycotina</taxon>
        <taxon>Saccharomycetes</taxon>
        <taxon>Saccharomycetales</taxon>
        <taxon>Saccharomycetaceae</taxon>
        <taxon>Saccharomyces</taxon>
    </lineage>
</organism>
<gene>
    <name type="ordered locus">YBR053C</name>
    <name type="ORF">YBR0506</name>
</gene>
<keyword id="KW-1185">Reference proteome</keyword>
<evidence type="ECO:0000269" key="1">
    <source>
    </source>
</evidence>
<evidence type="ECO:0000305" key="2"/>
<feature type="chain" id="PRO_0000173052" description="Uncharacterized protein YBR053C">
    <location>
        <begin position="1"/>
        <end position="358"/>
    </location>
</feature>
<feature type="sequence conflict" description="In Ref. 4; AAS56196." evidence="2" ref="4">
    <original>C</original>
    <variation>S</variation>
    <location>
        <position position="178"/>
    </location>
</feature>
<sequence length="358" mass="40296">MSSVGDFEEIILHDLKPYYHVPGAIHSEGITFVKETGTLLWVDIFKGEVHKVEDIEQPESSHSFFSISRANYGKNASIEYPPNPDELKESVGCIFPILDGASQNEIKQVLFGSKFGIGKLDFSKSEWEYVILYSECPELSTDRAYKLRSNDGNVSPDGKYIYVGLMSDFPFDLEPIGCLLRVDLLAHKIELVWNCLLIPNAIHWDESDQKTMYVTDSLNFTIWKCPGGDLLKRDELIDVKNSNNQSFESPEPDGSAIWFSKDGKHSGFLFITVWSTSKVQMFDLTNGKLLKEFILPEQTPRVSCCCFVGKDLFVTTANAEINDAVRTNTDKNGGCIYKIPNVLDGNVPLESTKRQPLH</sequence>
<accession>P38235</accession>
<accession>D6VQ52</accession>
<accession>Q6Q5P3</accession>
<reference key="1">
    <citation type="journal article" date="1995" name="Yeast">
        <title>Sequence and analysis of 24 kb on chromosome II of Saccharomyces cerevisiae.</title>
        <authorList>
            <person name="Aljinovic G."/>
            <person name="Pohl T.M."/>
        </authorList>
    </citation>
    <scope>NUCLEOTIDE SEQUENCE [GENOMIC DNA]</scope>
    <source>
        <strain>ATCC 204508 / S288c</strain>
    </source>
</reference>
<reference key="2">
    <citation type="journal article" date="1994" name="EMBO J.">
        <title>Complete DNA sequence of yeast chromosome II.</title>
        <authorList>
            <person name="Feldmann H."/>
            <person name="Aigle M."/>
            <person name="Aljinovic G."/>
            <person name="Andre B."/>
            <person name="Baclet M.C."/>
            <person name="Barthe C."/>
            <person name="Baur A."/>
            <person name="Becam A.-M."/>
            <person name="Biteau N."/>
            <person name="Boles E."/>
            <person name="Brandt T."/>
            <person name="Brendel M."/>
            <person name="Brueckner M."/>
            <person name="Bussereau F."/>
            <person name="Christiansen C."/>
            <person name="Contreras R."/>
            <person name="Crouzet M."/>
            <person name="Cziepluch C."/>
            <person name="Demolis N."/>
            <person name="Delaveau T."/>
            <person name="Doignon F."/>
            <person name="Domdey H."/>
            <person name="Duesterhus S."/>
            <person name="Dubois E."/>
            <person name="Dujon B."/>
            <person name="El Bakkoury M."/>
            <person name="Entian K.-D."/>
            <person name="Feuermann M."/>
            <person name="Fiers W."/>
            <person name="Fobo G.M."/>
            <person name="Fritz C."/>
            <person name="Gassenhuber J."/>
            <person name="Glansdorff N."/>
            <person name="Goffeau A."/>
            <person name="Grivell L.A."/>
            <person name="de Haan M."/>
            <person name="Hein C."/>
            <person name="Herbert C.J."/>
            <person name="Hollenberg C.P."/>
            <person name="Holmstroem K."/>
            <person name="Jacq C."/>
            <person name="Jacquet M."/>
            <person name="Jauniaux J.-C."/>
            <person name="Jonniaux J.-L."/>
            <person name="Kallesoee T."/>
            <person name="Kiesau P."/>
            <person name="Kirchrath L."/>
            <person name="Koetter P."/>
            <person name="Korol S."/>
            <person name="Liebl S."/>
            <person name="Logghe M."/>
            <person name="Lohan A.J.E."/>
            <person name="Louis E.J."/>
            <person name="Li Z.Y."/>
            <person name="Maat M.J."/>
            <person name="Mallet L."/>
            <person name="Mannhaupt G."/>
            <person name="Messenguy F."/>
            <person name="Miosga T."/>
            <person name="Molemans F."/>
            <person name="Mueller S."/>
            <person name="Nasr F."/>
            <person name="Obermaier B."/>
            <person name="Perea J."/>
            <person name="Pierard A."/>
            <person name="Piravandi E."/>
            <person name="Pohl F.M."/>
            <person name="Pohl T.M."/>
            <person name="Potier S."/>
            <person name="Proft M."/>
            <person name="Purnelle B."/>
            <person name="Ramezani Rad M."/>
            <person name="Rieger M."/>
            <person name="Rose M."/>
            <person name="Schaaff-Gerstenschlaeger I."/>
            <person name="Scherens B."/>
            <person name="Schwarzlose C."/>
            <person name="Skala J."/>
            <person name="Slonimski P.P."/>
            <person name="Smits P.H.M."/>
            <person name="Souciet J.-L."/>
            <person name="Steensma H.Y."/>
            <person name="Stucka R."/>
            <person name="Urrestarazu L.A."/>
            <person name="van der Aart Q.J.M."/>
            <person name="Van Dyck L."/>
            <person name="Vassarotti A."/>
            <person name="Vetter I."/>
            <person name="Vierendeels F."/>
            <person name="Vissers S."/>
            <person name="Wagner G."/>
            <person name="de Wergifosse P."/>
            <person name="Wolfe K.H."/>
            <person name="Zagulski M."/>
            <person name="Zimmermann F.K."/>
            <person name="Mewes H.-W."/>
            <person name="Kleine K."/>
        </authorList>
    </citation>
    <scope>NUCLEOTIDE SEQUENCE [LARGE SCALE GENOMIC DNA]</scope>
    <source>
        <strain>ATCC 204508 / S288c</strain>
    </source>
</reference>
<reference key="3">
    <citation type="journal article" date="2014" name="G3 (Bethesda)">
        <title>The reference genome sequence of Saccharomyces cerevisiae: Then and now.</title>
        <authorList>
            <person name="Engel S.R."/>
            <person name="Dietrich F.S."/>
            <person name="Fisk D.G."/>
            <person name="Binkley G."/>
            <person name="Balakrishnan R."/>
            <person name="Costanzo M.C."/>
            <person name="Dwight S.S."/>
            <person name="Hitz B.C."/>
            <person name="Karra K."/>
            <person name="Nash R.S."/>
            <person name="Weng S."/>
            <person name="Wong E.D."/>
            <person name="Lloyd P."/>
            <person name="Skrzypek M.S."/>
            <person name="Miyasato S.R."/>
            <person name="Simison M."/>
            <person name="Cherry J.M."/>
        </authorList>
    </citation>
    <scope>GENOME REANNOTATION</scope>
    <source>
        <strain>ATCC 204508 / S288c</strain>
    </source>
</reference>
<reference key="4">
    <citation type="journal article" date="2007" name="Genome Res.">
        <title>Approaching a complete repository of sequence-verified protein-encoding clones for Saccharomyces cerevisiae.</title>
        <authorList>
            <person name="Hu Y."/>
            <person name="Rolfs A."/>
            <person name="Bhullar B."/>
            <person name="Murthy T.V.S."/>
            <person name="Zhu C."/>
            <person name="Berger M.F."/>
            <person name="Camargo A.A."/>
            <person name="Kelley F."/>
            <person name="McCarron S."/>
            <person name="Jepson D."/>
            <person name="Richardson A."/>
            <person name="Raphael J."/>
            <person name="Moreira D."/>
            <person name="Taycher E."/>
            <person name="Zuo D."/>
            <person name="Mohr S."/>
            <person name="Kane M.F."/>
            <person name="Williamson J."/>
            <person name="Simpson A.J.G."/>
            <person name="Bulyk M.L."/>
            <person name="Harlow E."/>
            <person name="Marsischky G."/>
            <person name="Kolodner R.D."/>
            <person name="LaBaer J."/>
        </authorList>
    </citation>
    <scope>NUCLEOTIDE SEQUENCE [GENOMIC DNA]</scope>
    <source>
        <strain>ATCC 204508 / S288c</strain>
    </source>
</reference>
<reference key="5">
    <citation type="journal article" date="2003" name="Nature">
        <title>Global analysis of protein expression in yeast.</title>
        <authorList>
            <person name="Ghaemmaghami S."/>
            <person name="Huh W.-K."/>
            <person name="Bower K."/>
            <person name="Howson R.W."/>
            <person name="Belle A."/>
            <person name="Dephoure N."/>
            <person name="O'Shea E.K."/>
            <person name="Weissman J.S."/>
        </authorList>
    </citation>
    <scope>LEVEL OF PROTEIN EXPRESSION [LARGE SCALE ANALYSIS]</scope>
</reference>
<protein>
    <recommendedName>
        <fullName>Uncharacterized protein YBR053C</fullName>
    </recommendedName>
</protein>
<comment type="miscellaneous">
    <text evidence="1">Present with 4190 molecules/cell in log phase SD medium.</text>
</comment>
<comment type="similarity">
    <text evidence="2">Belongs to the SMP-30/CGR1 family.</text>
</comment>
<name>YBQ3_YEAST</name>
<proteinExistence type="evidence at protein level"/>
<dbReference type="EMBL" id="Z35922">
    <property type="protein sequence ID" value="CAA84996.1"/>
    <property type="molecule type" value="Genomic_DNA"/>
</dbReference>
<dbReference type="EMBL" id="Z46260">
    <property type="protein sequence ID" value="CAA86396.1"/>
    <property type="molecule type" value="Genomic_DNA"/>
</dbReference>
<dbReference type="EMBL" id="AY557870">
    <property type="protein sequence ID" value="AAS56196.1"/>
    <property type="molecule type" value="Genomic_DNA"/>
</dbReference>
<dbReference type="EMBL" id="BK006936">
    <property type="protein sequence ID" value="DAA07172.1"/>
    <property type="molecule type" value="Genomic_DNA"/>
</dbReference>
<dbReference type="PIR" id="S45911">
    <property type="entry name" value="S45911"/>
</dbReference>
<dbReference type="RefSeq" id="NP_009609.1">
    <property type="nucleotide sequence ID" value="NM_001178401.1"/>
</dbReference>
<dbReference type="SMR" id="P38235"/>
<dbReference type="BioGRID" id="32754">
    <property type="interactions" value="55"/>
</dbReference>
<dbReference type="FunCoup" id="P38235">
    <property type="interactions" value="81"/>
</dbReference>
<dbReference type="IntAct" id="P38235">
    <property type="interactions" value="4"/>
</dbReference>
<dbReference type="MINT" id="P38235"/>
<dbReference type="STRING" id="4932.YBR053C"/>
<dbReference type="iPTMnet" id="P38235"/>
<dbReference type="PaxDb" id="4932-YBR053C"/>
<dbReference type="PeptideAtlas" id="P38235"/>
<dbReference type="EnsemblFungi" id="YBR053C_mRNA">
    <property type="protein sequence ID" value="YBR053C"/>
    <property type="gene ID" value="YBR053C"/>
</dbReference>
<dbReference type="GeneID" id="852342"/>
<dbReference type="KEGG" id="sce:YBR053C"/>
<dbReference type="AGR" id="SGD:S000000257"/>
<dbReference type="SGD" id="S000000257">
    <property type="gene designation" value="YBR053C"/>
</dbReference>
<dbReference type="VEuPathDB" id="FungiDB:YBR053C"/>
<dbReference type="eggNOG" id="KOG4499">
    <property type="taxonomic scope" value="Eukaryota"/>
</dbReference>
<dbReference type="HOGENOM" id="CLU_036110_3_0_1"/>
<dbReference type="InParanoid" id="P38235"/>
<dbReference type="OMA" id="WAGTMRY"/>
<dbReference type="OrthoDB" id="423498at2759"/>
<dbReference type="BioCyc" id="YEAST:G3O-29024-MONOMER"/>
<dbReference type="BioGRID-ORCS" id="852342">
    <property type="hits" value="0 hits in 10 CRISPR screens"/>
</dbReference>
<dbReference type="PRO" id="PR:P38235"/>
<dbReference type="Proteomes" id="UP000002311">
    <property type="component" value="Chromosome II"/>
</dbReference>
<dbReference type="RNAct" id="P38235">
    <property type="molecule type" value="protein"/>
</dbReference>
<dbReference type="GO" id="GO:0005509">
    <property type="term" value="F:calcium ion binding"/>
    <property type="evidence" value="ECO:0000318"/>
    <property type="project" value="GO_Central"/>
</dbReference>
<dbReference type="GO" id="GO:0004341">
    <property type="term" value="F:gluconolactonase activity"/>
    <property type="evidence" value="ECO:0000318"/>
    <property type="project" value="GO_Central"/>
</dbReference>
<dbReference type="Gene3D" id="2.120.10.30">
    <property type="entry name" value="TolB, C-terminal domain"/>
    <property type="match status" value="1"/>
</dbReference>
<dbReference type="InterPro" id="IPR011042">
    <property type="entry name" value="6-blade_b-propeller_TolB-like"/>
</dbReference>
<dbReference type="InterPro" id="IPR013658">
    <property type="entry name" value="SGL"/>
</dbReference>
<dbReference type="PANTHER" id="PTHR10907">
    <property type="entry name" value="REGUCALCIN"/>
    <property type="match status" value="1"/>
</dbReference>
<dbReference type="PANTHER" id="PTHR10907:SF47">
    <property type="entry name" value="REGUCALCIN"/>
    <property type="match status" value="1"/>
</dbReference>
<dbReference type="Pfam" id="PF08450">
    <property type="entry name" value="SGL"/>
    <property type="match status" value="1"/>
</dbReference>
<dbReference type="SUPFAM" id="SSF63829">
    <property type="entry name" value="Calcium-dependent phosphotriesterase"/>
    <property type="match status" value="1"/>
</dbReference>